<organism>
    <name type="scientific">Thioalkalivibrio sulfidiphilus (strain HL-EbGR7)</name>
    <dbReference type="NCBI Taxonomy" id="396588"/>
    <lineage>
        <taxon>Bacteria</taxon>
        <taxon>Pseudomonadati</taxon>
        <taxon>Pseudomonadota</taxon>
        <taxon>Gammaproteobacteria</taxon>
        <taxon>Chromatiales</taxon>
        <taxon>Ectothiorhodospiraceae</taxon>
        <taxon>Thioalkalivibrio</taxon>
    </lineage>
</organism>
<comment type="function">
    <text evidence="1">Peptide chain release factor 1 directs the termination of translation in response to the peptide chain termination codons UAG and UAA.</text>
</comment>
<comment type="subcellular location">
    <subcellularLocation>
        <location evidence="1">Cytoplasm</location>
    </subcellularLocation>
</comment>
<comment type="PTM">
    <text evidence="1">Methylated by PrmC. Methylation increases the termination efficiency of RF1.</text>
</comment>
<comment type="similarity">
    <text evidence="1">Belongs to the prokaryotic/mitochondrial release factor family.</text>
</comment>
<feature type="chain" id="PRO_1000193512" description="Peptide chain release factor 1">
    <location>
        <begin position="1"/>
        <end position="361"/>
    </location>
</feature>
<feature type="modified residue" description="N5-methylglutamine" evidence="1">
    <location>
        <position position="237"/>
    </location>
</feature>
<accession>B8GLA1</accession>
<sequence>MKPSLLHRLEGVSERFQELAGLLSEPEVISDNARFRRLSMEYSQLEPVVEAFRRYEGAQADLTAAREMQKDPDPDLRAMAEDEAATAAERLETLELELQKLLIPKDPHDHSNLFLEIRAGTGGDEAAIFAGDLFRMYSRYAENQGWQVEILSQSEGEHGGYKEVIARLIGAGAYSRLKFESGAHRVQRVPATESQGRIHTSAATVAVMPEPDEVEAPEINPADLRVDTYRASGAGGQHVNKTDSAIRLTHLPTGIVVECQDERSQHKNRARAMSLLAAKLFEAEQARQQAEQSATRKSLVGSGDRSERIRTYNFPQGRITDHRINLTLYKLDAVMAGDLDPVIEPLINEHQAEKLAALADE</sequence>
<dbReference type="EMBL" id="CP001339">
    <property type="protein sequence ID" value="ACL71619.1"/>
    <property type="molecule type" value="Genomic_DNA"/>
</dbReference>
<dbReference type="RefSeq" id="WP_012637107.1">
    <property type="nucleotide sequence ID" value="NC_011901.1"/>
</dbReference>
<dbReference type="SMR" id="B8GLA1"/>
<dbReference type="STRING" id="396588.Tgr7_0522"/>
<dbReference type="KEGG" id="tgr:Tgr7_0522"/>
<dbReference type="eggNOG" id="COG0216">
    <property type="taxonomic scope" value="Bacteria"/>
</dbReference>
<dbReference type="HOGENOM" id="CLU_036856_0_1_6"/>
<dbReference type="OrthoDB" id="9806673at2"/>
<dbReference type="Proteomes" id="UP000002383">
    <property type="component" value="Chromosome"/>
</dbReference>
<dbReference type="GO" id="GO:0005737">
    <property type="term" value="C:cytoplasm"/>
    <property type="evidence" value="ECO:0007669"/>
    <property type="project" value="UniProtKB-SubCell"/>
</dbReference>
<dbReference type="GO" id="GO:0016149">
    <property type="term" value="F:translation release factor activity, codon specific"/>
    <property type="evidence" value="ECO:0007669"/>
    <property type="project" value="UniProtKB-UniRule"/>
</dbReference>
<dbReference type="FunFam" id="3.30.160.20:FF:000004">
    <property type="entry name" value="Peptide chain release factor 1"/>
    <property type="match status" value="1"/>
</dbReference>
<dbReference type="FunFam" id="3.30.70.1660:FF:000002">
    <property type="entry name" value="Peptide chain release factor 1"/>
    <property type="match status" value="1"/>
</dbReference>
<dbReference type="FunFam" id="3.30.70.1660:FF:000004">
    <property type="entry name" value="Peptide chain release factor 1"/>
    <property type="match status" value="1"/>
</dbReference>
<dbReference type="Gene3D" id="3.30.160.20">
    <property type="match status" value="1"/>
</dbReference>
<dbReference type="Gene3D" id="3.30.70.1660">
    <property type="match status" value="1"/>
</dbReference>
<dbReference type="Gene3D" id="6.10.140.1950">
    <property type="match status" value="1"/>
</dbReference>
<dbReference type="HAMAP" id="MF_00093">
    <property type="entry name" value="Rel_fac_1"/>
    <property type="match status" value="1"/>
</dbReference>
<dbReference type="InterPro" id="IPR005139">
    <property type="entry name" value="PCRF"/>
</dbReference>
<dbReference type="InterPro" id="IPR000352">
    <property type="entry name" value="Pep_chain_release_fac_I"/>
</dbReference>
<dbReference type="InterPro" id="IPR045853">
    <property type="entry name" value="Pep_chain_release_fac_I_sf"/>
</dbReference>
<dbReference type="InterPro" id="IPR050057">
    <property type="entry name" value="Prokaryotic/Mito_RF"/>
</dbReference>
<dbReference type="InterPro" id="IPR004373">
    <property type="entry name" value="RF-1"/>
</dbReference>
<dbReference type="NCBIfam" id="TIGR00019">
    <property type="entry name" value="prfA"/>
    <property type="match status" value="1"/>
</dbReference>
<dbReference type="NCBIfam" id="NF001859">
    <property type="entry name" value="PRK00591.1"/>
    <property type="match status" value="1"/>
</dbReference>
<dbReference type="PANTHER" id="PTHR43804">
    <property type="entry name" value="LD18447P"/>
    <property type="match status" value="1"/>
</dbReference>
<dbReference type="PANTHER" id="PTHR43804:SF7">
    <property type="entry name" value="LD18447P"/>
    <property type="match status" value="1"/>
</dbReference>
<dbReference type="Pfam" id="PF03462">
    <property type="entry name" value="PCRF"/>
    <property type="match status" value="1"/>
</dbReference>
<dbReference type="Pfam" id="PF00472">
    <property type="entry name" value="RF-1"/>
    <property type="match status" value="1"/>
</dbReference>
<dbReference type="SMART" id="SM00937">
    <property type="entry name" value="PCRF"/>
    <property type="match status" value="1"/>
</dbReference>
<dbReference type="SUPFAM" id="SSF75620">
    <property type="entry name" value="Release factor"/>
    <property type="match status" value="1"/>
</dbReference>
<dbReference type="PROSITE" id="PS00745">
    <property type="entry name" value="RF_PROK_I"/>
    <property type="match status" value="1"/>
</dbReference>
<keyword id="KW-0963">Cytoplasm</keyword>
<keyword id="KW-0488">Methylation</keyword>
<keyword id="KW-0648">Protein biosynthesis</keyword>
<keyword id="KW-1185">Reference proteome</keyword>
<name>RF1_THISH</name>
<gene>
    <name evidence="1" type="primary">prfA</name>
    <name type="ordered locus">Tgr7_0522</name>
</gene>
<reference key="1">
    <citation type="journal article" date="2011" name="Stand. Genomic Sci.">
        <title>Complete genome sequence of 'Thioalkalivibrio sulfidophilus' HL-EbGr7.</title>
        <authorList>
            <person name="Muyzer G."/>
            <person name="Sorokin D.Y."/>
            <person name="Mavromatis K."/>
            <person name="Lapidus A."/>
            <person name="Clum A."/>
            <person name="Ivanova N."/>
            <person name="Pati A."/>
            <person name="d'Haeseleer P."/>
            <person name="Woyke T."/>
            <person name="Kyrpides N.C."/>
        </authorList>
    </citation>
    <scope>NUCLEOTIDE SEQUENCE [LARGE SCALE GENOMIC DNA]</scope>
    <source>
        <strain>HL-EbGR7</strain>
    </source>
</reference>
<evidence type="ECO:0000255" key="1">
    <source>
        <dbReference type="HAMAP-Rule" id="MF_00093"/>
    </source>
</evidence>
<protein>
    <recommendedName>
        <fullName evidence="1">Peptide chain release factor 1</fullName>
        <shortName evidence="1">RF-1</shortName>
    </recommendedName>
</protein>
<proteinExistence type="inferred from homology"/>